<protein>
    <recommendedName>
        <fullName evidence="1">UPF0145 protein lpp0255</fullName>
    </recommendedName>
</protein>
<accession>Q5X8J5</accession>
<organism>
    <name type="scientific">Legionella pneumophila (strain Paris)</name>
    <dbReference type="NCBI Taxonomy" id="297246"/>
    <lineage>
        <taxon>Bacteria</taxon>
        <taxon>Pseudomonadati</taxon>
        <taxon>Pseudomonadota</taxon>
        <taxon>Gammaproteobacteria</taxon>
        <taxon>Legionellales</taxon>
        <taxon>Legionellaceae</taxon>
        <taxon>Legionella</taxon>
    </lineage>
</organism>
<sequence length="105" mass="11137">MTMMITTGNSFDGKVIKQCLGIVRGIVVRSPTISQGLMGGLKSIVGGKIGAYSQMCEHAREEAFQLMIEHAQALNANGIIAMRYDTGEIGQAGTEVLCYGTAVII</sequence>
<gene>
    <name type="ordered locus">lpp0255</name>
</gene>
<feature type="chain" id="PRO_1000013010" description="UPF0145 protein lpp0255">
    <location>
        <begin position="1"/>
        <end position="105"/>
    </location>
</feature>
<comment type="similarity">
    <text evidence="1">Belongs to the UPF0145 family.</text>
</comment>
<dbReference type="EMBL" id="CR628336">
    <property type="protein sequence ID" value="CAH11402.1"/>
    <property type="molecule type" value="Genomic_DNA"/>
</dbReference>
<dbReference type="RefSeq" id="WP_011212882.1">
    <property type="nucleotide sequence ID" value="NC_006368.1"/>
</dbReference>
<dbReference type="SMR" id="Q5X8J5"/>
<dbReference type="KEGG" id="lpp:lpp0255"/>
<dbReference type="LegioList" id="lpp0255"/>
<dbReference type="HOGENOM" id="CLU_117144_1_1_6"/>
<dbReference type="Gene3D" id="3.30.110.70">
    <property type="entry name" value="Hypothetical protein apc22750. Chain B"/>
    <property type="match status" value="1"/>
</dbReference>
<dbReference type="HAMAP" id="MF_00338">
    <property type="entry name" value="UPF0145"/>
    <property type="match status" value="1"/>
</dbReference>
<dbReference type="InterPro" id="IPR035439">
    <property type="entry name" value="UPF0145_dom_sf"/>
</dbReference>
<dbReference type="InterPro" id="IPR002765">
    <property type="entry name" value="UPF0145_YbjQ-like"/>
</dbReference>
<dbReference type="PANTHER" id="PTHR34068:SF2">
    <property type="entry name" value="UPF0145 PROTEIN SCO3412"/>
    <property type="match status" value="1"/>
</dbReference>
<dbReference type="PANTHER" id="PTHR34068">
    <property type="entry name" value="UPF0145 PROTEIN YBJQ"/>
    <property type="match status" value="1"/>
</dbReference>
<dbReference type="Pfam" id="PF01906">
    <property type="entry name" value="YbjQ_1"/>
    <property type="match status" value="1"/>
</dbReference>
<dbReference type="SUPFAM" id="SSF117782">
    <property type="entry name" value="YbjQ-like"/>
    <property type="match status" value="1"/>
</dbReference>
<evidence type="ECO:0000255" key="1">
    <source>
        <dbReference type="HAMAP-Rule" id="MF_00338"/>
    </source>
</evidence>
<proteinExistence type="inferred from homology"/>
<name>Y255_LEGPA</name>
<reference key="1">
    <citation type="journal article" date="2004" name="Nat. Genet.">
        <title>Evidence in the Legionella pneumophila genome for exploitation of host cell functions and high genome plasticity.</title>
        <authorList>
            <person name="Cazalet C."/>
            <person name="Rusniok C."/>
            <person name="Brueggemann H."/>
            <person name="Zidane N."/>
            <person name="Magnier A."/>
            <person name="Ma L."/>
            <person name="Tichit M."/>
            <person name="Jarraud S."/>
            <person name="Bouchier C."/>
            <person name="Vandenesch F."/>
            <person name="Kunst F."/>
            <person name="Etienne J."/>
            <person name="Glaser P."/>
            <person name="Buchrieser C."/>
        </authorList>
    </citation>
    <scope>NUCLEOTIDE SEQUENCE [LARGE SCALE GENOMIC DNA]</scope>
    <source>
        <strain>Paris</strain>
    </source>
</reference>